<feature type="chain" id="PRO_0000203349" description="Protein TMA23">
    <location>
        <begin position="1"/>
        <end position="211"/>
    </location>
</feature>
<feature type="region of interest" description="Disordered" evidence="1">
    <location>
        <begin position="115"/>
        <end position="211"/>
    </location>
</feature>
<feature type="compositionally biased region" description="Low complexity" evidence="1">
    <location>
        <begin position="116"/>
        <end position="125"/>
    </location>
</feature>
<feature type="compositionally biased region" description="Basic residues" evidence="1">
    <location>
        <begin position="140"/>
        <end position="149"/>
    </location>
</feature>
<feature type="compositionally biased region" description="Basic residues" evidence="1">
    <location>
        <begin position="158"/>
        <end position="176"/>
    </location>
</feature>
<feature type="compositionally biased region" description="Basic residues" evidence="1">
    <location>
        <begin position="185"/>
        <end position="197"/>
    </location>
</feature>
<feature type="compositionally biased region" description="Basic and acidic residues" evidence="1">
    <location>
        <begin position="198"/>
        <end position="211"/>
    </location>
</feature>
<organism>
    <name type="scientific">Saccharomyces cerevisiae (strain ATCC 204508 / S288c)</name>
    <name type="common">Baker's yeast</name>
    <dbReference type="NCBI Taxonomy" id="559292"/>
    <lineage>
        <taxon>Eukaryota</taxon>
        <taxon>Fungi</taxon>
        <taxon>Dikarya</taxon>
        <taxon>Ascomycota</taxon>
        <taxon>Saccharomycotina</taxon>
        <taxon>Saccharomycetes</taxon>
        <taxon>Saccharomycetales</taxon>
        <taxon>Saccharomycetaceae</taxon>
        <taxon>Saccharomyces</taxon>
    </lineage>
</organism>
<reference key="1">
    <citation type="journal article" date="1997" name="Nature">
        <title>The nucleotide sequence of Saccharomyces cerevisiae chromosome XIII.</title>
        <authorList>
            <person name="Bowman S."/>
            <person name="Churcher C.M."/>
            <person name="Badcock K."/>
            <person name="Brown D."/>
            <person name="Chillingworth T."/>
            <person name="Connor R."/>
            <person name="Dedman K."/>
            <person name="Devlin K."/>
            <person name="Gentles S."/>
            <person name="Hamlin N."/>
            <person name="Hunt S."/>
            <person name="Jagels K."/>
            <person name="Lye G."/>
            <person name="Moule S."/>
            <person name="Odell C."/>
            <person name="Pearson D."/>
            <person name="Rajandream M.A."/>
            <person name="Rice P."/>
            <person name="Skelton J."/>
            <person name="Walsh S.V."/>
            <person name="Whitehead S."/>
            <person name="Barrell B.G."/>
        </authorList>
    </citation>
    <scope>NUCLEOTIDE SEQUENCE [LARGE SCALE GENOMIC DNA]</scope>
    <source>
        <strain>ATCC 204508 / S288c</strain>
    </source>
</reference>
<reference key="2">
    <citation type="journal article" date="2014" name="G3 (Bethesda)">
        <title>The reference genome sequence of Saccharomyces cerevisiae: Then and now.</title>
        <authorList>
            <person name="Engel S.R."/>
            <person name="Dietrich F.S."/>
            <person name="Fisk D.G."/>
            <person name="Binkley G."/>
            <person name="Balakrishnan R."/>
            <person name="Costanzo M.C."/>
            <person name="Dwight S.S."/>
            <person name="Hitz B.C."/>
            <person name="Karra K."/>
            <person name="Nash R.S."/>
            <person name="Weng S."/>
            <person name="Wong E.D."/>
            <person name="Lloyd P."/>
            <person name="Skrzypek M.S."/>
            <person name="Miyasato S.R."/>
            <person name="Simison M."/>
            <person name="Cherry J.M."/>
        </authorList>
    </citation>
    <scope>GENOME REANNOTATION</scope>
    <source>
        <strain>ATCC 204508 / S288c</strain>
    </source>
</reference>
<reference key="3">
    <citation type="journal article" date="2003" name="Genome Biol.">
        <title>Reinvestigation of the Saccharomyces cerevisiae genome annotation by comparison to the genome of a related fungus: Ashbya gossypii.</title>
        <authorList>
            <person name="Brachat S."/>
            <person name="Dietrich F.S."/>
            <person name="Voegeli S."/>
            <person name="Zhang Z."/>
            <person name="Stuart L."/>
            <person name="Lerch A."/>
            <person name="Gates K."/>
            <person name="Gaffney T.D."/>
            <person name="Philippsen P."/>
        </authorList>
    </citation>
    <scope>NUCLEOTIDE SEQUENCE [GENOMIC DNA] OF 54-109</scope>
    <scope>IDENTIFICATION OF FRAMESHIFT</scope>
    <source>
        <strain>ATCC 204511 / S288c / AB972</strain>
    </source>
</reference>
<reference key="4">
    <citation type="journal article" date="2003" name="Nature">
        <title>Global analysis of protein localization in budding yeast.</title>
        <authorList>
            <person name="Huh W.-K."/>
            <person name="Falvo J.V."/>
            <person name="Gerke L.C."/>
            <person name="Carroll A.S."/>
            <person name="Howson R.W."/>
            <person name="Weissman J.S."/>
            <person name="O'Shea E.K."/>
        </authorList>
    </citation>
    <scope>SUBCELLULAR LOCATION [LARGE SCALE ANALYSIS]</scope>
</reference>
<reference key="5">
    <citation type="journal article" date="2006" name="Genes Dev.">
        <title>Systematic identification and functional screens of uncharacterized proteins associated with eukaryotic ribosomal complexes.</title>
        <authorList>
            <person name="Fleischer T.C."/>
            <person name="Weaver C.M."/>
            <person name="McAfee K.J."/>
            <person name="Jennings J.L."/>
            <person name="Link A.J."/>
        </authorList>
    </citation>
    <scope>ASSOCIATION WITH RIBOSOMAL COMPLEXES</scope>
    <scope>IDENTIFICATION BY MASS SPECTROMETRY</scope>
</reference>
<reference key="6">
    <citation type="journal article" date="2007" name="FEMS Yeast Res.">
        <title>Mutations in the nucleolar proteins Tma23 and Nop6 suppress the malfunction of the Nep1 protein.</title>
        <authorList>
            <person name="Buchhaupt M."/>
            <person name="Koetter P."/>
            <person name="Entian K.-D."/>
        </authorList>
    </citation>
    <scope>FUNCTION</scope>
    <scope>SUBCELLULAR LOCATION</scope>
    <scope>SUBUNIT</scope>
</reference>
<dbReference type="EMBL" id="Z49260">
    <property type="protein sequence ID" value="CAA89252.1"/>
    <property type="status" value="ALT_FRAME"/>
    <property type="molecule type" value="Genomic_DNA"/>
</dbReference>
<dbReference type="EMBL" id="AY227896">
    <property type="protein sequence ID" value="AAQ17205.1"/>
    <property type="molecule type" value="Genomic_DNA"/>
</dbReference>
<dbReference type="EMBL" id="BK006946">
    <property type="protein sequence ID" value="DAA10169.1"/>
    <property type="molecule type" value="Genomic_DNA"/>
</dbReference>
<dbReference type="PIR" id="S54481">
    <property type="entry name" value="S54481"/>
</dbReference>
<dbReference type="RefSeq" id="NP_013996.2">
    <property type="nucleotide sequence ID" value="NM_001182776.1"/>
</dbReference>
<dbReference type="BioGRID" id="35447">
    <property type="interactions" value="325"/>
</dbReference>
<dbReference type="DIP" id="DIP-1965N"/>
<dbReference type="FunCoup" id="Q03525">
    <property type="interactions" value="100"/>
</dbReference>
<dbReference type="IntAct" id="Q03525">
    <property type="interactions" value="20"/>
</dbReference>
<dbReference type="MINT" id="Q03525"/>
<dbReference type="STRING" id="4932.YMR269W"/>
<dbReference type="iPTMnet" id="Q03525"/>
<dbReference type="PaxDb" id="4932-YMR269W"/>
<dbReference type="PeptideAtlas" id="Q03525"/>
<dbReference type="EnsemblFungi" id="YMR269W_mRNA">
    <property type="protein sequence ID" value="YMR269W"/>
    <property type="gene ID" value="YMR269W"/>
</dbReference>
<dbReference type="GeneID" id="855311"/>
<dbReference type="KEGG" id="sce:YMR269W"/>
<dbReference type="AGR" id="SGD:S000004882"/>
<dbReference type="SGD" id="S000004882">
    <property type="gene designation" value="TMA23"/>
</dbReference>
<dbReference type="VEuPathDB" id="FungiDB:YMR269W"/>
<dbReference type="eggNOG" id="KOG2809">
    <property type="taxonomic scope" value="Eukaryota"/>
</dbReference>
<dbReference type="HOGENOM" id="CLU_082196_1_1_1"/>
<dbReference type="InParanoid" id="Q03525"/>
<dbReference type="OMA" id="KTTHDHT"/>
<dbReference type="OrthoDB" id="3366546at2759"/>
<dbReference type="BioCyc" id="YEAST:G3O-32942-MONOMER"/>
<dbReference type="BioGRID-ORCS" id="855311">
    <property type="hits" value="7 hits in 10 CRISPR screens"/>
</dbReference>
<dbReference type="PRO" id="PR:Q03525"/>
<dbReference type="Proteomes" id="UP000002311">
    <property type="component" value="Chromosome XIII"/>
</dbReference>
<dbReference type="RNAct" id="Q03525">
    <property type="molecule type" value="protein"/>
</dbReference>
<dbReference type="GO" id="GO:0005730">
    <property type="term" value="C:nucleolus"/>
    <property type="evidence" value="ECO:0000314"/>
    <property type="project" value="SGD"/>
</dbReference>
<dbReference type="GO" id="GO:0042274">
    <property type="term" value="P:ribosomal small subunit biogenesis"/>
    <property type="evidence" value="ECO:0000316"/>
    <property type="project" value="SGD"/>
</dbReference>
<dbReference type="InterPro" id="IPR050656">
    <property type="entry name" value="PINX1"/>
</dbReference>
<dbReference type="PANTHER" id="PTHR23149">
    <property type="entry name" value="G PATCH DOMAIN CONTAINING PROTEIN"/>
    <property type="match status" value="1"/>
</dbReference>
<dbReference type="PANTHER" id="PTHR23149:SF26">
    <property type="entry name" value="PROTEIN TMA23"/>
    <property type="match status" value="1"/>
</dbReference>
<sequence length="211" mass="23949">MDSKEYLISYGWKEGEAFREGGLKRPILVKHKRDKKGLGNAPGGNDGEAWWERLFDGHLKNLDVSTDSNNGSIKFTQNEAVATAVSKSSSPLYRWFVKGEGLKGTITNLGKKEEASFVVSSASSSKGKKRRRRDEDDNKVKRKKLKKDKKTSNDSESKKKKKKKSKKESKKGKKSKHSSDEGDKSKHKKSKKSKKHKKEESSARRDRKEHI</sequence>
<gene>
    <name type="primary">TMA23</name>
    <name type="ordered locus">YMR269W</name>
    <name type="ORF">YM8156.11</name>
    <name type="ORF">YMR268W-A</name>
</gene>
<comment type="function">
    <text evidence="3">Trans-acting factors of the ribosome biogenesis process.</text>
</comment>
<comment type="subunit">
    <text evidence="3">Forms homooligomers. Associates with ribosomal complexes.</text>
</comment>
<comment type="subcellular location">
    <subcellularLocation>
        <location evidence="2 3">Nucleus</location>
        <location evidence="2 3">Nucleolus</location>
    </subcellularLocation>
</comment>
<comment type="sequence caution" evidence="4">
    <conflict type="frameshift">
        <sequence resource="EMBL-CDS" id="CAA89252"/>
    </conflict>
</comment>
<proteinExistence type="evidence at protein level"/>
<protein>
    <recommendedName>
        <fullName>Protein TMA23</fullName>
    </recommendedName>
    <alternativeName>
        <fullName>23 kDa translation machinery-associated protein</fullName>
    </alternativeName>
</protein>
<evidence type="ECO:0000256" key="1">
    <source>
        <dbReference type="SAM" id="MobiDB-lite"/>
    </source>
</evidence>
<evidence type="ECO:0000269" key="2">
    <source>
    </source>
</evidence>
<evidence type="ECO:0000269" key="3">
    <source>
    </source>
</evidence>
<evidence type="ECO:0000305" key="4"/>
<accession>Q03525</accession>
<accession>D6W095</accession>
<accession>Q7Z870</accession>
<keyword id="KW-0539">Nucleus</keyword>
<keyword id="KW-1185">Reference proteome</keyword>
<keyword id="KW-0690">Ribosome biogenesis</keyword>
<name>TMA23_YEAST</name>